<reference key="1">
    <citation type="journal article" date="1994" name="Plant Physiol.">
        <title>Two cDNA clones encoding isoforms of the B subunit of the vacuolar ATPase from barley roots.</title>
        <authorList>
            <person name="Berkelman T."/>
            <person name="Houtchens K.A."/>
            <person name="Dupont F.M."/>
        </authorList>
    </citation>
    <scope>NUCLEOTIDE SEQUENCE [MRNA]</scope>
    <source>
        <tissue>Root</tissue>
    </source>
</reference>
<evidence type="ECO:0000305" key="1"/>
<organism>
    <name type="scientific">Hordeum vulgare</name>
    <name type="common">Barley</name>
    <dbReference type="NCBI Taxonomy" id="4513"/>
    <lineage>
        <taxon>Eukaryota</taxon>
        <taxon>Viridiplantae</taxon>
        <taxon>Streptophyta</taxon>
        <taxon>Embryophyta</taxon>
        <taxon>Tracheophyta</taxon>
        <taxon>Spermatophyta</taxon>
        <taxon>Magnoliopsida</taxon>
        <taxon>Liliopsida</taxon>
        <taxon>Poales</taxon>
        <taxon>Poaceae</taxon>
        <taxon>BOP clade</taxon>
        <taxon>Pooideae</taxon>
        <taxon>Triticodae</taxon>
        <taxon>Triticeae</taxon>
        <taxon>Hordeinae</taxon>
        <taxon>Hordeum</taxon>
    </lineage>
</organism>
<keyword id="KW-0375">Hydrogen ion transport</keyword>
<keyword id="KW-0406">Ion transport</keyword>
<keyword id="KW-0813">Transport</keyword>
<protein>
    <recommendedName>
        <fullName>V-type proton ATPase subunit B 1</fullName>
        <shortName>V-ATPase subunit B 1</shortName>
    </recommendedName>
    <alternativeName>
        <fullName>Vacuolar proton pump subunit B 1</fullName>
    </alternativeName>
</protein>
<accession>Q40078</accession>
<name>VATB1_HORVU</name>
<dbReference type="EMBL" id="L11862">
    <property type="protein sequence ID" value="AAA81330.1"/>
    <property type="molecule type" value="mRNA"/>
</dbReference>
<dbReference type="SMR" id="Q40078"/>
<dbReference type="ExpressionAtlas" id="Q40078">
    <property type="expression patterns" value="baseline and differential"/>
</dbReference>
<dbReference type="GO" id="GO:0033180">
    <property type="term" value="C:proton-transporting V-type ATPase, V1 domain"/>
    <property type="evidence" value="ECO:0007669"/>
    <property type="project" value="InterPro"/>
</dbReference>
<dbReference type="GO" id="GO:0005524">
    <property type="term" value="F:ATP binding"/>
    <property type="evidence" value="ECO:0007669"/>
    <property type="project" value="InterPro"/>
</dbReference>
<dbReference type="GO" id="GO:0046961">
    <property type="term" value="F:proton-transporting ATPase activity, rotational mechanism"/>
    <property type="evidence" value="ECO:0007669"/>
    <property type="project" value="InterPro"/>
</dbReference>
<dbReference type="GO" id="GO:0046034">
    <property type="term" value="P:ATP metabolic process"/>
    <property type="evidence" value="ECO:0007669"/>
    <property type="project" value="InterPro"/>
</dbReference>
<dbReference type="GO" id="GO:0007035">
    <property type="term" value="P:vacuolar acidification"/>
    <property type="evidence" value="ECO:0007669"/>
    <property type="project" value="TreeGrafter"/>
</dbReference>
<dbReference type="CDD" id="cd18112">
    <property type="entry name" value="ATP-synt_V_A-type_beta_C"/>
    <property type="match status" value="1"/>
</dbReference>
<dbReference type="CDD" id="cd18118">
    <property type="entry name" value="ATP-synt_V_A-type_beta_N"/>
    <property type="match status" value="1"/>
</dbReference>
<dbReference type="CDD" id="cd01135">
    <property type="entry name" value="V_A-ATPase_B"/>
    <property type="match status" value="1"/>
</dbReference>
<dbReference type="FunFam" id="3.40.50.12240:FF:000001">
    <property type="entry name" value="V-type proton ATPase subunit B, brain"/>
    <property type="match status" value="1"/>
</dbReference>
<dbReference type="Gene3D" id="3.40.50.12240">
    <property type="match status" value="1"/>
</dbReference>
<dbReference type="HAMAP" id="MF_00310">
    <property type="entry name" value="ATP_synth_B_arch"/>
    <property type="match status" value="1"/>
</dbReference>
<dbReference type="InterPro" id="IPR055190">
    <property type="entry name" value="ATP-synt_VA_C"/>
</dbReference>
<dbReference type="InterPro" id="IPR020003">
    <property type="entry name" value="ATPase_a/bsu_AS"/>
</dbReference>
<dbReference type="InterPro" id="IPR004100">
    <property type="entry name" value="ATPase_F1/V1/A1_a/bsu_N"/>
</dbReference>
<dbReference type="InterPro" id="IPR000194">
    <property type="entry name" value="ATPase_F1/V1/A1_a/bsu_nucl-bd"/>
</dbReference>
<dbReference type="InterPro" id="IPR005723">
    <property type="entry name" value="ATPase_V1-cplx_bsu"/>
</dbReference>
<dbReference type="InterPro" id="IPR027417">
    <property type="entry name" value="P-loop_NTPase"/>
</dbReference>
<dbReference type="InterPro" id="IPR022879">
    <property type="entry name" value="V-ATPase_su_B/beta"/>
</dbReference>
<dbReference type="NCBIfam" id="NF003235">
    <property type="entry name" value="PRK04196.1"/>
    <property type="match status" value="1"/>
</dbReference>
<dbReference type="NCBIfam" id="TIGR01040">
    <property type="entry name" value="V-ATPase_V1_B"/>
    <property type="match status" value="1"/>
</dbReference>
<dbReference type="PANTHER" id="PTHR43389">
    <property type="entry name" value="V-TYPE PROTON ATPASE SUBUNIT B"/>
    <property type="match status" value="1"/>
</dbReference>
<dbReference type="PANTHER" id="PTHR43389:SF4">
    <property type="entry name" value="V-TYPE PROTON ATPASE SUBUNIT B"/>
    <property type="match status" value="1"/>
</dbReference>
<dbReference type="Pfam" id="PF00006">
    <property type="entry name" value="ATP-synt_ab"/>
    <property type="match status" value="1"/>
</dbReference>
<dbReference type="Pfam" id="PF02874">
    <property type="entry name" value="ATP-synt_ab_N"/>
    <property type="match status" value="1"/>
</dbReference>
<dbReference type="Pfam" id="PF22919">
    <property type="entry name" value="ATP-synt_VA_C"/>
    <property type="match status" value="1"/>
</dbReference>
<dbReference type="PIRSF" id="PIRSF039114">
    <property type="entry name" value="V-ATPsynth_beta/V-ATPase_B"/>
    <property type="match status" value="1"/>
</dbReference>
<dbReference type="SUPFAM" id="SSF52540">
    <property type="entry name" value="P-loop containing nucleoside triphosphate hydrolases"/>
    <property type="match status" value="1"/>
</dbReference>
<dbReference type="PROSITE" id="PS00152">
    <property type="entry name" value="ATPASE_ALPHA_BETA"/>
    <property type="match status" value="1"/>
</dbReference>
<sequence>MGLVKEGADMEEGTLEIGMEYRTVSGVAGPLVILDKVKGPKYQEIVNIRLGDGTTRRGQVLEVDGEKAVVQVFEGTSGIDNKYTTVQFTGEVLKTPVSLDMLGRIFNGSGKPIDNGPPILPEAYLDISGSSINPSERTYPEEMIQTGISTIDVMNSIARGQKIPLFSAAGLPHNEIAAQICRQAGLVKRLEKGKHAEGGGEDDNFAIVFAAMGVNMETAQFFKRDFEENGSMERVTLFLNLANDPTIERIITPRIALTTAEYLAYECGKHVLVILTDMSSYADALREVSAAREEVPGRRGYPGYMYTDLATIYERAGRIEGRTGSITQIPILTMPNDDITHPTPDLTGYITEGQIYIDRQLHNRQIYPPINVLPSLSRLMKSAIGEGMTRRDHSDVSNQLYANYAIGKDVQAMKAVVGEEALSSEDLLYLEFLDKFERKFVAQGAYDTRNIFQSLDLAWTLLRIFPRELLHRIPAKTLDAFYSRDAAH</sequence>
<feature type="chain" id="PRO_0000144643" description="V-type proton ATPase subunit B 1">
    <location>
        <begin position="1"/>
        <end position="488"/>
    </location>
</feature>
<proteinExistence type="evidence at transcript level"/>
<comment type="function">
    <text>Non-catalytic subunit of the peripheral V1 complex of vacuolar ATPase. V-ATPase is responsible for acidifying a variety of intracellular compartments in eukaryotic cells.</text>
</comment>
<comment type="subunit">
    <text>V-ATPase is a heteromultimeric enzyme composed of a peripheral catalytic V1 complex (main components: subunits A, B, C, D, E, and F) attached to an integral membrane V0 proton pore complex (main component: the proteolipid protein).</text>
</comment>
<comment type="similarity">
    <text evidence="1">Belongs to the ATPase alpha/beta chains family.</text>
</comment>